<reference key="1">
    <citation type="journal article" date="2007" name="Proc. Natl. Acad. Sci. U.S.A.">
        <title>Genome plasticity of BCG and impact on vaccine efficacy.</title>
        <authorList>
            <person name="Brosch R."/>
            <person name="Gordon S.V."/>
            <person name="Garnier T."/>
            <person name="Eiglmeier K."/>
            <person name="Frigui W."/>
            <person name="Valenti P."/>
            <person name="Dos Santos S."/>
            <person name="Duthoy S."/>
            <person name="Lacroix C."/>
            <person name="Garcia-Pelayo C."/>
            <person name="Inwald J.K."/>
            <person name="Golby P."/>
            <person name="Garcia J.N."/>
            <person name="Hewinson R.G."/>
            <person name="Behr M.A."/>
            <person name="Quail M.A."/>
            <person name="Churcher C."/>
            <person name="Barrell B.G."/>
            <person name="Parkhill J."/>
            <person name="Cole S.T."/>
        </authorList>
    </citation>
    <scope>NUCLEOTIDE SEQUENCE [LARGE SCALE GENOMIC DNA]</scope>
    <source>
        <strain>BCG / Pasteur 1173P2</strain>
    </source>
</reference>
<dbReference type="EC" id="2.7.2.11" evidence="1"/>
<dbReference type="EMBL" id="AM408590">
    <property type="protein sequence ID" value="CAL72447.1"/>
    <property type="molecule type" value="Genomic_DNA"/>
</dbReference>
<dbReference type="RefSeq" id="WP_003412568.1">
    <property type="nucleotide sequence ID" value="NC_008769.1"/>
</dbReference>
<dbReference type="SMR" id="A1KLD5"/>
<dbReference type="KEGG" id="mbb:BCG_2459c"/>
<dbReference type="HOGENOM" id="CLU_025400_2_0_11"/>
<dbReference type="UniPathway" id="UPA00098">
    <property type="reaction ID" value="UER00359"/>
</dbReference>
<dbReference type="Proteomes" id="UP000001472">
    <property type="component" value="Chromosome"/>
</dbReference>
<dbReference type="GO" id="GO:0005829">
    <property type="term" value="C:cytosol"/>
    <property type="evidence" value="ECO:0007669"/>
    <property type="project" value="TreeGrafter"/>
</dbReference>
<dbReference type="GO" id="GO:0005524">
    <property type="term" value="F:ATP binding"/>
    <property type="evidence" value="ECO:0007669"/>
    <property type="project" value="UniProtKB-KW"/>
</dbReference>
<dbReference type="GO" id="GO:0004349">
    <property type="term" value="F:glutamate 5-kinase activity"/>
    <property type="evidence" value="ECO:0007669"/>
    <property type="project" value="UniProtKB-UniRule"/>
</dbReference>
<dbReference type="GO" id="GO:0003723">
    <property type="term" value="F:RNA binding"/>
    <property type="evidence" value="ECO:0007669"/>
    <property type="project" value="InterPro"/>
</dbReference>
<dbReference type="GO" id="GO:0055129">
    <property type="term" value="P:L-proline biosynthetic process"/>
    <property type="evidence" value="ECO:0007669"/>
    <property type="project" value="UniProtKB-UniRule"/>
</dbReference>
<dbReference type="CDD" id="cd04242">
    <property type="entry name" value="AAK_G5K_ProB"/>
    <property type="match status" value="1"/>
</dbReference>
<dbReference type="CDD" id="cd21157">
    <property type="entry name" value="PUA_G5K"/>
    <property type="match status" value="1"/>
</dbReference>
<dbReference type="FunFam" id="3.40.1160.10:FF:000018">
    <property type="entry name" value="Glutamate 5-kinase"/>
    <property type="match status" value="1"/>
</dbReference>
<dbReference type="Gene3D" id="3.40.1160.10">
    <property type="entry name" value="Acetylglutamate kinase-like"/>
    <property type="match status" value="1"/>
</dbReference>
<dbReference type="Gene3D" id="2.30.130.10">
    <property type="entry name" value="PUA domain"/>
    <property type="match status" value="1"/>
</dbReference>
<dbReference type="HAMAP" id="MF_00456">
    <property type="entry name" value="ProB"/>
    <property type="match status" value="1"/>
</dbReference>
<dbReference type="InterPro" id="IPR036393">
    <property type="entry name" value="AceGlu_kinase-like_sf"/>
</dbReference>
<dbReference type="InterPro" id="IPR001048">
    <property type="entry name" value="Asp/Glu/Uridylate_kinase"/>
</dbReference>
<dbReference type="InterPro" id="IPR041739">
    <property type="entry name" value="G5K_ProB"/>
</dbReference>
<dbReference type="InterPro" id="IPR001057">
    <property type="entry name" value="Glu/AcGlu_kinase"/>
</dbReference>
<dbReference type="InterPro" id="IPR011529">
    <property type="entry name" value="Glu_5kinase"/>
</dbReference>
<dbReference type="InterPro" id="IPR005715">
    <property type="entry name" value="Glu_5kinase/COase_Synthase"/>
</dbReference>
<dbReference type="InterPro" id="IPR019797">
    <property type="entry name" value="Glutamate_5-kinase_CS"/>
</dbReference>
<dbReference type="InterPro" id="IPR002478">
    <property type="entry name" value="PUA"/>
</dbReference>
<dbReference type="InterPro" id="IPR015947">
    <property type="entry name" value="PUA-like_sf"/>
</dbReference>
<dbReference type="InterPro" id="IPR036974">
    <property type="entry name" value="PUA_sf"/>
</dbReference>
<dbReference type="NCBIfam" id="TIGR01027">
    <property type="entry name" value="proB"/>
    <property type="match status" value="1"/>
</dbReference>
<dbReference type="PANTHER" id="PTHR43654">
    <property type="entry name" value="GLUTAMATE 5-KINASE"/>
    <property type="match status" value="1"/>
</dbReference>
<dbReference type="PANTHER" id="PTHR43654:SF1">
    <property type="entry name" value="ISOPENTENYL PHOSPHATE KINASE"/>
    <property type="match status" value="1"/>
</dbReference>
<dbReference type="Pfam" id="PF00696">
    <property type="entry name" value="AA_kinase"/>
    <property type="match status" value="1"/>
</dbReference>
<dbReference type="Pfam" id="PF01472">
    <property type="entry name" value="PUA"/>
    <property type="match status" value="1"/>
</dbReference>
<dbReference type="PIRSF" id="PIRSF000729">
    <property type="entry name" value="GK"/>
    <property type="match status" value="1"/>
</dbReference>
<dbReference type="PRINTS" id="PR00474">
    <property type="entry name" value="GLU5KINASE"/>
</dbReference>
<dbReference type="SMART" id="SM00359">
    <property type="entry name" value="PUA"/>
    <property type="match status" value="1"/>
</dbReference>
<dbReference type="SUPFAM" id="SSF53633">
    <property type="entry name" value="Carbamate kinase-like"/>
    <property type="match status" value="1"/>
</dbReference>
<dbReference type="SUPFAM" id="SSF88697">
    <property type="entry name" value="PUA domain-like"/>
    <property type="match status" value="1"/>
</dbReference>
<dbReference type="PROSITE" id="PS00902">
    <property type="entry name" value="GLUTAMATE_5_KINASE"/>
    <property type="match status" value="1"/>
</dbReference>
<dbReference type="PROSITE" id="PS50890">
    <property type="entry name" value="PUA"/>
    <property type="match status" value="1"/>
</dbReference>
<feature type="chain" id="PRO_1000081074" description="Glutamate 5-kinase">
    <location>
        <begin position="1"/>
        <end position="376"/>
    </location>
</feature>
<feature type="domain" description="PUA" evidence="1">
    <location>
        <begin position="280"/>
        <end position="358"/>
    </location>
</feature>
<feature type="binding site" evidence="1">
    <location>
        <position position="18"/>
    </location>
    <ligand>
        <name>ATP</name>
        <dbReference type="ChEBI" id="CHEBI:30616"/>
    </ligand>
</feature>
<feature type="binding site" evidence="1">
    <location>
        <position position="58"/>
    </location>
    <ligand>
        <name>substrate</name>
    </ligand>
</feature>
<feature type="binding site" evidence="1">
    <location>
        <position position="145"/>
    </location>
    <ligand>
        <name>substrate</name>
    </ligand>
</feature>
<feature type="binding site" evidence="1">
    <location>
        <position position="157"/>
    </location>
    <ligand>
        <name>substrate</name>
    </ligand>
</feature>
<feature type="binding site" evidence="1">
    <location>
        <begin position="177"/>
        <end position="178"/>
    </location>
    <ligand>
        <name>ATP</name>
        <dbReference type="ChEBI" id="CHEBI:30616"/>
    </ligand>
</feature>
<feature type="binding site" evidence="1">
    <location>
        <begin position="218"/>
        <end position="224"/>
    </location>
    <ligand>
        <name>ATP</name>
        <dbReference type="ChEBI" id="CHEBI:30616"/>
    </ligand>
</feature>
<proteinExistence type="inferred from homology"/>
<evidence type="ECO:0000255" key="1">
    <source>
        <dbReference type="HAMAP-Rule" id="MF_00456"/>
    </source>
</evidence>
<gene>
    <name evidence="1" type="primary">proB</name>
    <name type="ordered locus">BCG_2459c</name>
</gene>
<name>PROB_MYCBP</name>
<keyword id="KW-0028">Amino-acid biosynthesis</keyword>
<keyword id="KW-0067">ATP-binding</keyword>
<keyword id="KW-0963">Cytoplasm</keyword>
<keyword id="KW-0418">Kinase</keyword>
<keyword id="KW-0547">Nucleotide-binding</keyword>
<keyword id="KW-0641">Proline biosynthesis</keyword>
<keyword id="KW-0808">Transferase</keyword>
<comment type="function">
    <text evidence="1">Catalyzes the transfer of a phosphate group to glutamate to form L-glutamate 5-phosphate.</text>
</comment>
<comment type="catalytic activity">
    <reaction evidence="1">
        <text>L-glutamate + ATP = L-glutamyl 5-phosphate + ADP</text>
        <dbReference type="Rhea" id="RHEA:14877"/>
        <dbReference type="ChEBI" id="CHEBI:29985"/>
        <dbReference type="ChEBI" id="CHEBI:30616"/>
        <dbReference type="ChEBI" id="CHEBI:58274"/>
        <dbReference type="ChEBI" id="CHEBI:456216"/>
        <dbReference type="EC" id="2.7.2.11"/>
    </reaction>
</comment>
<comment type="pathway">
    <text evidence="1">Amino-acid biosynthesis; L-proline biosynthesis; L-glutamate 5-semialdehyde from L-glutamate: step 1/2.</text>
</comment>
<comment type="subcellular location">
    <subcellularLocation>
        <location evidence="1">Cytoplasm</location>
    </subcellularLocation>
</comment>
<comment type="similarity">
    <text evidence="1">Belongs to the glutamate 5-kinase family.</text>
</comment>
<sequence length="376" mass="38804">MRSPHRDAIRTARGLVVKVGTTALTTPSGMFDAGRLAGLAEAVERRMKAGSDVVIVSSGAIAAGIEPLGLSRRPKDLATKQAAASVGQVALVNSWSAAFARYGRTVGQVLLTAHDISMRVQHTNAQRTLDRLRALHAVAIVNENDTVATNEIRFGDNDRLSALVAHLVGADALVLLSDIDGLYDCDPRKTADATFIPEVSGPADLDGVVAGRSSHLGTGGMASKVSAALLAADAGVPVLLAPAADAATALADASVGTVFAARPARLSARRFWVRYAAEATGALTLDAGAVRAVVRQRRSLLAAGITAVSGRFCGGDVVELRAPDAAMVARGVVAYDASELATMVGRSTSELPGELRRPVVHADDLVAVSAKQAKQV</sequence>
<protein>
    <recommendedName>
        <fullName evidence="1">Glutamate 5-kinase</fullName>
        <ecNumber evidence="1">2.7.2.11</ecNumber>
    </recommendedName>
    <alternativeName>
        <fullName evidence="1">Gamma-glutamyl kinase</fullName>
        <shortName evidence="1">GK</shortName>
    </alternativeName>
</protein>
<accession>A1KLD5</accession>
<organism>
    <name type="scientific">Mycobacterium bovis (strain BCG / Pasteur 1173P2)</name>
    <dbReference type="NCBI Taxonomy" id="410289"/>
    <lineage>
        <taxon>Bacteria</taxon>
        <taxon>Bacillati</taxon>
        <taxon>Actinomycetota</taxon>
        <taxon>Actinomycetes</taxon>
        <taxon>Mycobacteriales</taxon>
        <taxon>Mycobacteriaceae</taxon>
        <taxon>Mycobacterium</taxon>
        <taxon>Mycobacterium tuberculosis complex</taxon>
    </lineage>
</organism>